<name>PSBV2_THEVL</name>
<feature type="signal peptide" evidence="2">
    <location>
        <begin position="1"/>
        <end position="34"/>
    </location>
</feature>
<feature type="chain" id="PRO_0000295609" description="Cytochrome c-550-like protein">
    <location>
        <begin position="35"/>
        <end position="175"/>
    </location>
</feature>
<feature type="binding site" description="covalent" evidence="1 3">
    <location>
        <position position="81"/>
    </location>
    <ligand>
        <name>heme c</name>
        <dbReference type="ChEBI" id="CHEBI:61717"/>
    </ligand>
</feature>
<feature type="binding site" description="covalent" evidence="1 3">
    <location>
        <position position="84"/>
    </location>
    <ligand>
        <name>heme c</name>
        <dbReference type="ChEBI" id="CHEBI:61717"/>
    </ligand>
</feature>
<feature type="binding site" description="axial binding residue" evidence="1 3">
    <location>
        <position position="85"/>
    </location>
    <ligand>
        <name>heme c</name>
        <dbReference type="ChEBI" id="CHEBI:61717"/>
    </ligand>
    <ligandPart>
        <name>Fe</name>
        <dbReference type="ChEBI" id="CHEBI:18248"/>
    </ligandPart>
</feature>
<feature type="binding site" description="axial binding residue" evidence="1">
    <location>
        <position position="135"/>
    </location>
    <ligand>
        <name>heme c</name>
        <dbReference type="ChEBI" id="CHEBI:61717"/>
    </ligand>
    <ligandPart>
        <name>Fe</name>
        <dbReference type="ChEBI" id="CHEBI:18248"/>
    </ligandPart>
</feature>
<gene>
    <name evidence="5" type="primary">psbV2</name>
</gene>
<comment type="function">
    <text evidence="4">Probable low-potential cytochrome c, can partially replace cytochrome c-550 (PsbV) function.</text>
</comment>
<comment type="cofactor">
    <cofactor evidence="1">
        <name>heme c</name>
        <dbReference type="ChEBI" id="CHEBI:61717"/>
    </cofactor>
    <text evidence="1">Binds 1 heme c group covalently per subunit.</text>
</comment>
<comment type="subcellular location">
    <subcellularLocation>
        <location evidence="7">Cellular thylakoid membrane</location>
        <topology evidence="7">Peripheral membrane protein</topology>
        <orientation evidence="7">Lumenal side</orientation>
    </subcellularLocation>
    <text evidence="6">Associated with photosystem II at the lumenal side of the thylakoid membrane.</text>
</comment>
<comment type="similarity">
    <text evidence="6">Belongs to the cytochrome c family. PsbV subfamily.</text>
</comment>
<reference key="1">
    <citation type="journal article" date="2001" name="Plant Cell Physiol.">
        <title>Functional analysis of psbV and a novel c-type cytochrome gene psbV2 of the thermophilic cyanobacterium Thermosynechococcus elongatus strain BP-1.</title>
        <authorList>
            <person name="Katoh H."/>
            <person name="Itoh S."/>
            <person name="Shen J.-R."/>
            <person name="Ikeuchi M."/>
        </authorList>
    </citation>
    <scope>NUCLEOTIDE SEQUENCE [GENOMIC DNA]</scope>
    <scope>FUNCTION</scope>
</reference>
<dbReference type="EMBL" id="AB052598">
    <property type="protein sequence ID" value="BAB20064.1"/>
    <property type="molecule type" value="Genomic_DNA"/>
</dbReference>
<dbReference type="SMR" id="Q9ET95"/>
<dbReference type="GO" id="GO:0009523">
    <property type="term" value="C:photosystem II"/>
    <property type="evidence" value="ECO:0007669"/>
    <property type="project" value="UniProtKB-KW"/>
</dbReference>
<dbReference type="GO" id="GO:0031676">
    <property type="term" value="C:plasma membrane-derived thylakoid membrane"/>
    <property type="evidence" value="ECO:0007669"/>
    <property type="project" value="UniProtKB-SubCell"/>
</dbReference>
<dbReference type="GO" id="GO:0009055">
    <property type="term" value="F:electron transfer activity"/>
    <property type="evidence" value="ECO:0007669"/>
    <property type="project" value="InterPro"/>
</dbReference>
<dbReference type="GO" id="GO:0020037">
    <property type="term" value="F:heme binding"/>
    <property type="evidence" value="ECO:0007669"/>
    <property type="project" value="InterPro"/>
</dbReference>
<dbReference type="GO" id="GO:0005506">
    <property type="term" value="F:iron ion binding"/>
    <property type="evidence" value="ECO:0007669"/>
    <property type="project" value="InterPro"/>
</dbReference>
<dbReference type="GO" id="GO:0015979">
    <property type="term" value="P:photosynthesis"/>
    <property type="evidence" value="ECO:0007669"/>
    <property type="project" value="UniProtKB-KW"/>
</dbReference>
<dbReference type="GO" id="GO:0022904">
    <property type="term" value="P:respiratory electron transport chain"/>
    <property type="evidence" value="ECO:0007669"/>
    <property type="project" value="InterPro"/>
</dbReference>
<dbReference type="Gene3D" id="1.10.760.10">
    <property type="entry name" value="Cytochrome c-like domain"/>
    <property type="match status" value="1"/>
</dbReference>
<dbReference type="InterPro" id="IPR009056">
    <property type="entry name" value="Cyt_c-like_dom"/>
</dbReference>
<dbReference type="InterPro" id="IPR036909">
    <property type="entry name" value="Cyt_c-like_dom_sf"/>
</dbReference>
<dbReference type="InterPro" id="IPR029490">
    <property type="entry name" value="Cytochrom_C550"/>
</dbReference>
<dbReference type="InterPro" id="IPR016003">
    <property type="entry name" value="PsbV_cyt_c550-like"/>
</dbReference>
<dbReference type="NCBIfam" id="TIGR03046">
    <property type="entry name" value="PS_II_psbV2"/>
    <property type="match status" value="1"/>
</dbReference>
<dbReference type="Pfam" id="PF14495">
    <property type="entry name" value="Cytochrom_C550"/>
    <property type="match status" value="1"/>
</dbReference>
<dbReference type="PIRSF" id="PIRSF005890">
    <property type="entry name" value="Phot_II_cyt_c550"/>
    <property type="match status" value="1"/>
</dbReference>
<dbReference type="SUPFAM" id="SSF46626">
    <property type="entry name" value="Cytochrome c"/>
    <property type="match status" value="1"/>
</dbReference>
<dbReference type="PROSITE" id="PS51007">
    <property type="entry name" value="CYTC"/>
    <property type="match status" value="1"/>
</dbReference>
<proteinExistence type="inferred from homology"/>
<organism>
    <name type="scientific">Thermostichus vulcanus</name>
    <name type="common">Synechococcus vulcanus</name>
    <dbReference type="NCBI Taxonomy" id="32053"/>
    <lineage>
        <taxon>Bacteria</taxon>
        <taxon>Bacillati</taxon>
        <taxon>Cyanobacteriota</taxon>
        <taxon>Cyanophyceae</taxon>
        <taxon>Thermostichales</taxon>
        <taxon>Thermostichaceae</taxon>
        <taxon>Thermostichus</taxon>
    </lineage>
</organism>
<accession>Q9ET95</accession>
<sequence length="175" mass="19118">MYQPHFWQRSIGWLCGGLLILLLGWTIAPATALAAAGVDNYVIQYLKVTDTVELPVNDRGETKTFTAVDLTRGKRLFEENCKNCHVGGSTLPNPLVSLSLKDLKGATPPRDTIASLVAFQRSPKSYDGSEESYSCRRVSEDWLTTEQLETLAAFILRAAAVAPGWGVESFPDSAP</sequence>
<keyword id="KW-0249">Electron transport</keyword>
<keyword id="KW-0349">Heme</keyword>
<keyword id="KW-0408">Iron</keyword>
<keyword id="KW-0472">Membrane</keyword>
<keyword id="KW-0479">Metal-binding</keyword>
<keyword id="KW-0602">Photosynthesis</keyword>
<keyword id="KW-0604">Photosystem II</keyword>
<keyword id="KW-0732">Signal</keyword>
<keyword id="KW-0793">Thylakoid</keyword>
<keyword id="KW-0813">Transport</keyword>
<protein>
    <recommendedName>
        <fullName>Cytochrome c-550-like protein</fullName>
    </recommendedName>
</protein>
<evidence type="ECO:0000250" key="1">
    <source>
        <dbReference type="UniProtKB" id="Q8DJE2"/>
    </source>
</evidence>
<evidence type="ECO:0000255" key="2"/>
<evidence type="ECO:0000255" key="3">
    <source>
        <dbReference type="PROSITE-ProRule" id="PRU00433"/>
    </source>
</evidence>
<evidence type="ECO:0000269" key="4">
    <source>
    </source>
</evidence>
<evidence type="ECO:0000303" key="5">
    <source>
    </source>
</evidence>
<evidence type="ECO:0000305" key="6"/>
<evidence type="ECO:0000305" key="7">
    <source>
    </source>
</evidence>